<gene>
    <name evidence="1" type="primary">sulA</name>
</gene>
<name>SULA_ECOLX</name>
<organism>
    <name type="scientific">Escherichia coli</name>
    <dbReference type="NCBI Taxonomy" id="562"/>
    <lineage>
        <taxon>Bacteria</taxon>
        <taxon>Pseudomonadati</taxon>
        <taxon>Pseudomonadota</taxon>
        <taxon>Gammaproteobacteria</taxon>
        <taxon>Enterobacterales</taxon>
        <taxon>Enterobacteriaceae</taxon>
        <taxon>Escherichia</taxon>
    </lineage>
</organism>
<comment type="function">
    <text evidence="1">Component of the SOS system and an inhibitor of cell division. Accumulation of SulA causes rapid cessation of cell division and the appearance of long, non-septate filaments. In the presence of GTP, binds a polymerization-competent form of FtsZ in a 1:1 ratio, thus inhibiting FtsZ polymerization and therefore preventing it from participating in the assembly of the Z ring. This mechanism prevents the premature segregation of damaged DNA to daughter cells during cell division.</text>
</comment>
<comment type="subunit">
    <text evidence="1">Interacts with FtsZ.</text>
</comment>
<comment type="induction">
    <text evidence="1">By DNA damage, as part of the SOS response.</text>
</comment>
<comment type="PTM">
    <text evidence="1">Is rapidly cleaved and degraded by the Lon protease once DNA damage is repaired.</text>
</comment>
<comment type="similarity">
    <text evidence="1">Belongs to the SulA family.</text>
</comment>
<feature type="chain" id="PRO_0000343958" description="Cell division inhibitor SulA">
    <location>
        <begin position="1"/>
        <end position="169"/>
    </location>
</feature>
<feature type="region of interest" description="FtsZ binding" evidence="1">
    <location>
        <begin position="106"/>
        <end position="112"/>
    </location>
</feature>
<feature type="region of interest" description="Lon protease binding" evidence="1">
    <location>
        <begin position="162"/>
        <end position="169"/>
    </location>
</feature>
<feature type="site" description="Essential for degradation by Lon protease" evidence="1">
    <location>
        <position position="169"/>
    </location>
</feature>
<accession>Q1JQN1</accession>
<proteinExistence type="inferred from homology"/>
<sequence length="169" mass="18801">MYTSGYAHRSSSFSSAASKIARVSTENTTAGLISEVVYREDQPMMTQLLLLPLLQQLGQQSRWQLWLTPQQKLSREWVQASGLPLTKVMQISQLSPCHTVESMVRALRTGNYSVVIGWLADDLTEEEHAELVDAANEGNAMGFIMRPVSASSHATRQLSGLKIHSNLYH</sequence>
<keyword id="KW-0131">Cell cycle</keyword>
<keyword id="KW-0132">Cell division</keyword>
<keyword id="KW-0227">DNA damage</keyword>
<keyword id="KW-0717">Septation</keyword>
<keyword id="KW-0742">SOS response</keyword>
<evidence type="ECO:0000255" key="1">
    <source>
        <dbReference type="HAMAP-Rule" id="MF_01179"/>
    </source>
</evidence>
<protein>
    <recommendedName>
        <fullName evidence="1">Cell division inhibitor SulA</fullName>
    </recommendedName>
</protein>
<dbReference type="EMBL" id="AY616619">
    <property type="protein sequence ID" value="AAZ80084.1"/>
    <property type="molecule type" value="Genomic_DNA"/>
</dbReference>
<dbReference type="RefSeq" id="WP_000288710.1">
    <property type="nucleotide sequence ID" value="NZ_WXZA01000010.1"/>
</dbReference>
<dbReference type="SMR" id="Q1JQN1"/>
<dbReference type="STRING" id="585034.ECIAI1_0999"/>
<dbReference type="GeneID" id="93776456"/>
<dbReference type="eggNOG" id="COG5404">
    <property type="taxonomic scope" value="Bacteria"/>
</dbReference>
<dbReference type="OMA" id="YGFIMRP"/>
<dbReference type="GO" id="GO:0000917">
    <property type="term" value="P:division septum assembly"/>
    <property type="evidence" value="ECO:0007669"/>
    <property type="project" value="UniProtKB-KW"/>
</dbReference>
<dbReference type="GO" id="GO:0006281">
    <property type="term" value="P:DNA repair"/>
    <property type="evidence" value="ECO:0007669"/>
    <property type="project" value="TreeGrafter"/>
</dbReference>
<dbReference type="GO" id="GO:0051782">
    <property type="term" value="P:negative regulation of cell division"/>
    <property type="evidence" value="ECO:0007669"/>
    <property type="project" value="UniProtKB-UniRule"/>
</dbReference>
<dbReference type="GO" id="GO:0009432">
    <property type="term" value="P:SOS response"/>
    <property type="evidence" value="ECO:0007669"/>
    <property type="project" value="UniProtKB-UniRule"/>
</dbReference>
<dbReference type="FunFam" id="3.40.50.300:FF:000417">
    <property type="entry name" value="Cell division inhibitor SulA"/>
    <property type="match status" value="1"/>
</dbReference>
<dbReference type="Gene3D" id="3.40.50.300">
    <property type="entry name" value="P-loop containing nucleotide triphosphate hydrolases"/>
    <property type="match status" value="1"/>
</dbReference>
<dbReference type="HAMAP" id="MF_01179">
    <property type="entry name" value="SulA"/>
    <property type="match status" value="1"/>
</dbReference>
<dbReference type="InterPro" id="IPR004596">
    <property type="entry name" value="Cell_div_suppressor_SulA"/>
</dbReference>
<dbReference type="InterPro" id="IPR027417">
    <property type="entry name" value="P-loop_NTPase"/>
</dbReference>
<dbReference type="InterPro" id="IPR050356">
    <property type="entry name" value="SulA_CellDiv_inhibitor"/>
</dbReference>
<dbReference type="InterPro" id="IPR047696">
    <property type="entry name" value="SulA_enterobact"/>
</dbReference>
<dbReference type="NCBIfam" id="NF007892">
    <property type="entry name" value="PRK10595.1"/>
    <property type="match status" value="1"/>
</dbReference>
<dbReference type="NCBIfam" id="TIGR00623">
    <property type="entry name" value="SOS_SulA_coli"/>
    <property type="match status" value="1"/>
</dbReference>
<dbReference type="PANTHER" id="PTHR35369">
    <property type="entry name" value="BLR3025 PROTEIN-RELATED"/>
    <property type="match status" value="1"/>
</dbReference>
<dbReference type="PANTHER" id="PTHR35369:SF4">
    <property type="entry name" value="CELL DIVISION INHIBITOR SULA"/>
    <property type="match status" value="1"/>
</dbReference>
<dbReference type="Pfam" id="PF03846">
    <property type="entry name" value="SulA"/>
    <property type="match status" value="1"/>
</dbReference>
<dbReference type="PIRSF" id="PIRSF003093">
    <property type="entry name" value="SulA"/>
    <property type="match status" value="1"/>
</dbReference>
<dbReference type="SUPFAM" id="SSF52540">
    <property type="entry name" value="P-loop containing nucleoside triphosphate hydrolases"/>
    <property type="match status" value="1"/>
</dbReference>
<reference key="1">
    <citation type="journal article" date="2006" name="FEMS Microbiol. Lett.">
        <title>The analysis of cell division and cell wall synthesis genes reveals mutationally inactivated ftsQ and mraY in a protoplast-type L-form of Escherichia coli.</title>
        <authorList>
            <person name="Siddiqui R.A."/>
            <person name="Hoischen C."/>
            <person name="Holst O."/>
            <person name="Heinze I."/>
            <person name="Schlott B."/>
            <person name="Gumpert J."/>
            <person name="Diekmann S."/>
            <person name="Grosse F."/>
            <person name="Platzer M."/>
        </authorList>
    </citation>
    <scope>NUCLEOTIDE SEQUENCE [GENOMIC DNA]</scope>
    <source>
        <strain>LW1655F+</strain>
    </source>
</reference>